<feature type="chain" id="PRO_0000230690" description="Small ribosomal subunit protein uS3">
    <location>
        <begin position="1"/>
        <end position="253"/>
    </location>
</feature>
<feature type="domain" description="KH type-2" evidence="1">
    <location>
        <begin position="39"/>
        <end position="109"/>
    </location>
</feature>
<feature type="region of interest" description="Disordered" evidence="2">
    <location>
        <begin position="220"/>
        <end position="253"/>
    </location>
</feature>
<feature type="compositionally biased region" description="Basic and acidic residues" evidence="2">
    <location>
        <begin position="221"/>
        <end position="242"/>
    </location>
</feature>
<feature type="compositionally biased region" description="Basic residues" evidence="2">
    <location>
        <begin position="243"/>
        <end position="253"/>
    </location>
</feature>
<protein>
    <recommendedName>
        <fullName evidence="1">Small ribosomal subunit protein uS3</fullName>
    </recommendedName>
    <alternativeName>
        <fullName evidence="3">30S ribosomal protein S3</fullName>
    </alternativeName>
</protein>
<gene>
    <name evidence="1" type="primary">rpsC</name>
    <name type="ordered locus">Cag_1845</name>
</gene>
<accession>Q3APH9</accession>
<comment type="function">
    <text evidence="1">Binds the lower part of the 30S subunit head. Binds mRNA in the 70S ribosome, positioning it for translation.</text>
</comment>
<comment type="subunit">
    <text evidence="1">Part of the 30S ribosomal subunit. Forms a tight complex with proteins S10 and S14.</text>
</comment>
<comment type="similarity">
    <text evidence="1">Belongs to the universal ribosomal protein uS3 family.</text>
</comment>
<evidence type="ECO:0000255" key="1">
    <source>
        <dbReference type="HAMAP-Rule" id="MF_01309"/>
    </source>
</evidence>
<evidence type="ECO:0000256" key="2">
    <source>
        <dbReference type="SAM" id="MobiDB-lite"/>
    </source>
</evidence>
<evidence type="ECO:0000305" key="3"/>
<reference key="1">
    <citation type="submission" date="2005-08" db="EMBL/GenBank/DDBJ databases">
        <title>Complete sequence of Chlorobium chlorochromatii CaD3.</title>
        <authorList>
            <consortium name="US DOE Joint Genome Institute"/>
            <person name="Copeland A."/>
            <person name="Lucas S."/>
            <person name="Lapidus A."/>
            <person name="Barry K."/>
            <person name="Detter J.C."/>
            <person name="Glavina T."/>
            <person name="Hammon N."/>
            <person name="Israni S."/>
            <person name="Pitluck S."/>
            <person name="Bryant D."/>
            <person name="Schmutz J."/>
            <person name="Larimer F."/>
            <person name="Land M."/>
            <person name="Kyrpides N."/>
            <person name="Ivanova N."/>
            <person name="Richardson P."/>
        </authorList>
    </citation>
    <scope>NUCLEOTIDE SEQUENCE [LARGE SCALE GENOMIC DNA]</scope>
    <source>
        <strain>CaD3</strain>
    </source>
</reference>
<organism>
    <name type="scientific">Chlorobium chlorochromatii (strain CaD3)</name>
    <dbReference type="NCBI Taxonomy" id="340177"/>
    <lineage>
        <taxon>Bacteria</taxon>
        <taxon>Pseudomonadati</taxon>
        <taxon>Chlorobiota</taxon>
        <taxon>Chlorobiia</taxon>
        <taxon>Chlorobiales</taxon>
        <taxon>Chlorobiaceae</taxon>
        <taxon>Chlorobium/Pelodictyon group</taxon>
        <taxon>Chlorobium</taxon>
    </lineage>
</organism>
<proteinExistence type="inferred from homology"/>
<sequence length="253" mass="28696">MGQKVNPTGFRLGIIRDWTSRWYDDSPVISEKIKQDHIIRNYVLARLKKERAGIARINIERTTKHVKINIYAARPGAVVGRKGEEINNLSQELSRIIGKEVKIDVVEVIKPEIEAQLIGENIAYQLENRVSFRRAMKQAIQQAMRAGAEGVRIRCAGRLGGAEIARAEQYKEGKIPLHTIRANVDYASVTAHTIAGTIGIKVWVYKGEVLVQRIDAIEEDEMKKMKDRRNDGGAKGRDSRDNRSKRRSRSKRS</sequence>
<dbReference type="EMBL" id="CP000108">
    <property type="protein sequence ID" value="ABB29096.1"/>
    <property type="molecule type" value="Genomic_DNA"/>
</dbReference>
<dbReference type="SMR" id="Q3APH9"/>
<dbReference type="STRING" id="340177.Cag_1845"/>
<dbReference type="KEGG" id="cch:Cag_1845"/>
<dbReference type="eggNOG" id="COG0092">
    <property type="taxonomic scope" value="Bacteria"/>
</dbReference>
<dbReference type="HOGENOM" id="CLU_058591_0_2_10"/>
<dbReference type="OrthoDB" id="9806396at2"/>
<dbReference type="GO" id="GO:0022627">
    <property type="term" value="C:cytosolic small ribosomal subunit"/>
    <property type="evidence" value="ECO:0007669"/>
    <property type="project" value="TreeGrafter"/>
</dbReference>
<dbReference type="GO" id="GO:0003729">
    <property type="term" value="F:mRNA binding"/>
    <property type="evidence" value="ECO:0007669"/>
    <property type="project" value="UniProtKB-UniRule"/>
</dbReference>
<dbReference type="GO" id="GO:0019843">
    <property type="term" value="F:rRNA binding"/>
    <property type="evidence" value="ECO:0007669"/>
    <property type="project" value="UniProtKB-UniRule"/>
</dbReference>
<dbReference type="GO" id="GO:0003735">
    <property type="term" value="F:structural constituent of ribosome"/>
    <property type="evidence" value="ECO:0007669"/>
    <property type="project" value="InterPro"/>
</dbReference>
<dbReference type="GO" id="GO:0006412">
    <property type="term" value="P:translation"/>
    <property type="evidence" value="ECO:0007669"/>
    <property type="project" value="UniProtKB-UniRule"/>
</dbReference>
<dbReference type="CDD" id="cd02412">
    <property type="entry name" value="KH-II_30S_S3"/>
    <property type="match status" value="1"/>
</dbReference>
<dbReference type="FunFam" id="3.30.300.20:FF:000001">
    <property type="entry name" value="30S ribosomal protein S3"/>
    <property type="match status" value="1"/>
</dbReference>
<dbReference type="Gene3D" id="3.30.300.20">
    <property type="match status" value="1"/>
</dbReference>
<dbReference type="Gene3D" id="3.30.1140.32">
    <property type="entry name" value="Ribosomal protein S3, C-terminal domain"/>
    <property type="match status" value="1"/>
</dbReference>
<dbReference type="HAMAP" id="MF_01309_B">
    <property type="entry name" value="Ribosomal_uS3_B"/>
    <property type="match status" value="1"/>
</dbReference>
<dbReference type="InterPro" id="IPR004087">
    <property type="entry name" value="KH_dom"/>
</dbReference>
<dbReference type="InterPro" id="IPR015946">
    <property type="entry name" value="KH_dom-like_a/b"/>
</dbReference>
<dbReference type="InterPro" id="IPR004044">
    <property type="entry name" value="KH_dom_type_2"/>
</dbReference>
<dbReference type="InterPro" id="IPR009019">
    <property type="entry name" value="KH_sf_prok-type"/>
</dbReference>
<dbReference type="InterPro" id="IPR036419">
    <property type="entry name" value="Ribosomal_S3_C_sf"/>
</dbReference>
<dbReference type="InterPro" id="IPR005704">
    <property type="entry name" value="Ribosomal_uS3_bac-typ"/>
</dbReference>
<dbReference type="InterPro" id="IPR001351">
    <property type="entry name" value="Ribosomal_uS3_C"/>
</dbReference>
<dbReference type="InterPro" id="IPR018280">
    <property type="entry name" value="Ribosomal_uS3_CS"/>
</dbReference>
<dbReference type="NCBIfam" id="TIGR01009">
    <property type="entry name" value="rpsC_bact"/>
    <property type="match status" value="1"/>
</dbReference>
<dbReference type="PANTHER" id="PTHR11760">
    <property type="entry name" value="30S/40S RIBOSOMAL PROTEIN S3"/>
    <property type="match status" value="1"/>
</dbReference>
<dbReference type="PANTHER" id="PTHR11760:SF19">
    <property type="entry name" value="SMALL RIBOSOMAL SUBUNIT PROTEIN US3C"/>
    <property type="match status" value="1"/>
</dbReference>
<dbReference type="Pfam" id="PF07650">
    <property type="entry name" value="KH_2"/>
    <property type="match status" value="1"/>
</dbReference>
<dbReference type="Pfam" id="PF00189">
    <property type="entry name" value="Ribosomal_S3_C"/>
    <property type="match status" value="1"/>
</dbReference>
<dbReference type="SMART" id="SM00322">
    <property type="entry name" value="KH"/>
    <property type="match status" value="1"/>
</dbReference>
<dbReference type="SUPFAM" id="SSF54814">
    <property type="entry name" value="Prokaryotic type KH domain (KH-domain type II)"/>
    <property type="match status" value="1"/>
</dbReference>
<dbReference type="SUPFAM" id="SSF54821">
    <property type="entry name" value="Ribosomal protein S3 C-terminal domain"/>
    <property type="match status" value="1"/>
</dbReference>
<dbReference type="PROSITE" id="PS50823">
    <property type="entry name" value="KH_TYPE_2"/>
    <property type="match status" value="1"/>
</dbReference>
<dbReference type="PROSITE" id="PS00548">
    <property type="entry name" value="RIBOSOMAL_S3"/>
    <property type="match status" value="1"/>
</dbReference>
<name>RS3_CHLCH</name>
<keyword id="KW-0687">Ribonucleoprotein</keyword>
<keyword id="KW-0689">Ribosomal protein</keyword>
<keyword id="KW-0694">RNA-binding</keyword>
<keyword id="KW-0699">rRNA-binding</keyword>